<feature type="chain" id="PRO_1000144767" description="Hydroxyacylglutathione hydrolase">
    <location>
        <begin position="1"/>
        <end position="251"/>
    </location>
</feature>
<feature type="binding site" evidence="1">
    <location>
        <position position="53"/>
    </location>
    <ligand>
        <name>Zn(2+)</name>
        <dbReference type="ChEBI" id="CHEBI:29105"/>
        <label>1</label>
    </ligand>
</feature>
<feature type="binding site" evidence="1">
    <location>
        <position position="55"/>
    </location>
    <ligand>
        <name>Zn(2+)</name>
        <dbReference type="ChEBI" id="CHEBI:29105"/>
        <label>1</label>
    </ligand>
</feature>
<feature type="binding site" evidence="1">
    <location>
        <position position="57"/>
    </location>
    <ligand>
        <name>Zn(2+)</name>
        <dbReference type="ChEBI" id="CHEBI:29105"/>
        <label>2</label>
    </ligand>
</feature>
<feature type="binding site" evidence="1">
    <location>
        <position position="58"/>
    </location>
    <ligand>
        <name>Zn(2+)</name>
        <dbReference type="ChEBI" id="CHEBI:29105"/>
        <label>2</label>
    </ligand>
</feature>
<feature type="binding site" evidence="1">
    <location>
        <position position="110"/>
    </location>
    <ligand>
        <name>Zn(2+)</name>
        <dbReference type="ChEBI" id="CHEBI:29105"/>
        <label>1</label>
    </ligand>
</feature>
<feature type="binding site" evidence="1">
    <location>
        <position position="127"/>
    </location>
    <ligand>
        <name>Zn(2+)</name>
        <dbReference type="ChEBI" id="CHEBI:29105"/>
        <label>1</label>
    </ligand>
</feature>
<feature type="binding site" evidence="1">
    <location>
        <position position="127"/>
    </location>
    <ligand>
        <name>Zn(2+)</name>
        <dbReference type="ChEBI" id="CHEBI:29105"/>
        <label>2</label>
    </ligand>
</feature>
<feature type="binding site" evidence="1">
    <location>
        <position position="165"/>
    </location>
    <ligand>
        <name>Zn(2+)</name>
        <dbReference type="ChEBI" id="CHEBI:29105"/>
        <label>2</label>
    </ligand>
</feature>
<organism>
    <name type="scientific">Escherichia fergusonii (strain ATCC 35469 / DSM 13698 / CCUG 18766 / IAM 14443 / JCM 21226 / LMG 7866 / NBRC 102419 / NCTC 12128 / CDC 0568-73)</name>
    <dbReference type="NCBI Taxonomy" id="585054"/>
    <lineage>
        <taxon>Bacteria</taxon>
        <taxon>Pseudomonadati</taxon>
        <taxon>Pseudomonadota</taxon>
        <taxon>Gammaproteobacteria</taxon>
        <taxon>Enterobacterales</taxon>
        <taxon>Enterobacteriaceae</taxon>
        <taxon>Escherichia</taxon>
    </lineage>
</organism>
<keyword id="KW-0378">Hydrolase</keyword>
<keyword id="KW-0479">Metal-binding</keyword>
<keyword id="KW-0862">Zinc</keyword>
<name>GLO2_ESCF3</name>
<dbReference type="EC" id="3.1.2.6" evidence="1"/>
<dbReference type="EMBL" id="CU928158">
    <property type="protein sequence ID" value="CAQ87810.1"/>
    <property type="molecule type" value="Genomic_DNA"/>
</dbReference>
<dbReference type="RefSeq" id="WP_001052732.1">
    <property type="nucleotide sequence ID" value="NC_011740.1"/>
</dbReference>
<dbReference type="SMR" id="B7LW87"/>
<dbReference type="GeneID" id="75058680"/>
<dbReference type="KEGG" id="efe:EFER_0241"/>
<dbReference type="HOGENOM" id="CLU_030571_4_1_6"/>
<dbReference type="OrthoDB" id="9802248at2"/>
<dbReference type="UniPathway" id="UPA00619">
    <property type="reaction ID" value="UER00676"/>
</dbReference>
<dbReference type="Proteomes" id="UP000000745">
    <property type="component" value="Chromosome"/>
</dbReference>
<dbReference type="GO" id="GO:0004416">
    <property type="term" value="F:hydroxyacylglutathione hydrolase activity"/>
    <property type="evidence" value="ECO:0007669"/>
    <property type="project" value="UniProtKB-UniRule"/>
</dbReference>
<dbReference type="GO" id="GO:0046872">
    <property type="term" value="F:metal ion binding"/>
    <property type="evidence" value="ECO:0007669"/>
    <property type="project" value="UniProtKB-KW"/>
</dbReference>
<dbReference type="GO" id="GO:0019243">
    <property type="term" value="P:methylglyoxal catabolic process to D-lactate via S-lactoyl-glutathione"/>
    <property type="evidence" value="ECO:0007669"/>
    <property type="project" value="InterPro"/>
</dbReference>
<dbReference type="CDD" id="cd07723">
    <property type="entry name" value="hydroxyacylglutathione_hydrolase_MBL-fold"/>
    <property type="match status" value="1"/>
</dbReference>
<dbReference type="FunFam" id="3.60.15.10:FF:000012">
    <property type="entry name" value="Hydroxyacylglutathione hydrolase"/>
    <property type="match status" value="1"/>
</dbReference>
<dbReference type="Gene3D" id="3.60.15.10">
    <property type="entry name" value="Ribonuclease Z/Hydroxyacylglutathione hydrolase-like"/>
    <property type="match status" value="1"/>
</dbReference>
<dbReference type="HAMAP" id="MF_01374">
    <property type="entry name" value="Glyoxalase_2"/>
    <property type="match status" value="1"/>
</dbReference>
<dbReference type="InterPro" id="IPR035680">
    <property type="entry name" value="Clx_II_MBL"/>
</dbReference>
<dbReference type="InterPro" id="IPR050110">
    <property type="entry name" value="Glyoxalase_II_hydrolase"/>
</dbReference>
<dbReference type="InterPro" id="IPR032282">
    <property type="entry name" value="HAGH_C"/>
</dbReference>
<dbReference type="InterPro" id="IPR017782">
    <property type="entry name" value="Hydroxyacylglutathione_Hdrlase"/>
</dbReference>
<dbReference type="InterPro" id="IPR001279">
    <property type="entry name" value="Metallo-B-lactamas"/>
</dbReference>
<dbReference type="InterPro" id="IPR036866">
    <property type="entry name" value="RibonucZ/Hydroxyglut_hydro"/>
</dbReference>
<dbReference type="NCBIfam" id="TIGR03413">
    <property type="entry name" value="GSH_gloB"/>
    <property type="match status" value="1"/>
</dbReference>
<dbReference type="NCBIfam" id="NF007597">
    <property type="entry name" value="PRK10241.1"/>
    <property type="match status" value="1"/>
</dbReference>
<dbReference type="PANTHER" id="PTHR43705">
    <property type="entry name" value="HYDROXYACYLGLUTATHIONE HYDROLASE"/>
    <property type="match status" value="1"/>
</dbReference>
<dbReference type="PANTHER" id="PTHR43705:SF1">
    <property type="entry name" value="HYDROXYACYLGLUTATHIONE HYDROLASE GLOB"/>
    <property type="match status" value="1"/>
</dbReference>
<dbReference type="Pfam" id="PF16123">
    <property type="entry name" value="HAGH_C"/>
    <property type="match status" value="1"/>
</dbReference>
<dbReference type="Pfam" id="PF00753">
    <property type="entry name" value="Lactamase_B"/>
    <property type="match status" value="1"/>
</dbReference>
<dbReference type="PIRSF" id="PIRSF005457">
    <property type="entry name" value="Glx"/>
    <property type="match status" value="1"/>
</dbReference>
<dbReference type="SMART" id="SM00849">
    <property type="entry name" value="Lactamase_B"/>
    <property type="match status" value="1"/>
</dbReference>
<dbReference type="SUPFAM" id="SSF56281">
    <property type="entry name" value="Metallo-hydrolase/oxidoreductase"/>
    <property type="match status" value="1"/>
</dbReference>
<comment type="function">
    <text evidence="1">Thiolesterase that catalyzes the hydrolysis of S-D-lactoyl-glutathione to form glutathione and D-lactic acid.</text>
</comment>
<comment type="catalytic activity">
    <reaction evidence="1">
        <text>an S-(2-hydroxyacyl)glutathione + H2O = a 2-hydroxy carboxylate + glutathione + H(+)</text>
        <dbReference type="Rhea" id="RHEA:21864"/>
        <dbReference type="ChEBI" id="CHEBI:15377"/>
        <dbReference type="ChEBI" id="CHEBI:15378"/>
        <dbReference type="ChEBI" id="CHEBI:57925"/>
        <dbReference type="ChEBI" id="CHEBI:58896"/>
        <dbReference type="ChEBI" id="CHEBI:71261"/>
        <dbReference type="EC" id="3.1.2.6"/>
    </reaction>
</comment>
<comment type="cofactor">
    <cofactor evidence="1">
        <name>Zn(2+)</name>
        <dbReference type="ChEBI" id="CHEBI:29105"/>
    </cofactor>
    <text evidence="1">Binds 2 Zn(2+) ions per subunit.</text>
</comment>
<comment type="pathway">
    <text evidence="1">Secondary metabolite metabolism; methylglyoxal degradation; (R)-lactate from methylglyoxal: step 2/2.</text>
</comment>
<comment type="subunit">
    <text evidence="1">Monomer.</text>
</comment>
<comment type="similarity">
    <text evidence="1">Belongs to the metallo-beta-lactamase superfamily. Glyoxalase II family.</text>
</comment>
<proteinExistence type="inferred from homology"/>
<sequence length="251" mass="28459">MNLNSIPAFDDNYIWVLNDEAGRCLIVDPGDAEPVLNAIAANNWQPEAIFLTHHHHDHVGGVKELVKKFPQIVVYGPQETQDKGTTQVVKDGETAFVLGHEFSVIATPGHTLGHICYFSKPYLFCGDTLFSGGCGRLFEGTPSQMYQSLKKLSALPDDTLVCCAHEYTLSNMKFALSILPHDLSINDYYRKVKELRAKNQITLPVILKNERQINVFLRTEDIDLINVINEETLLQQPEERFAWLRSKKDRF</sequence>
<gene>
    <name evidence="1" type="primary">gloB</name>
    <name type="ordered locus">EFER_0241</name>
</gene>
<reference key="1">
    <citation type="journal article" date="2009" name="PLoS Genet.">
        <title>Organised genome dynamics in the Escherichia coli species results in highly diverse adaptive paths.</title>
        <authorList>
            <person name="Touchon M."/>
            <person name="Hoede C."/>
            <person name="Tenaillon O."/>
            <person name="Barbe V."/>
            <person name="Baeriswyl S."/>
            <person name="Bidet P."/>
            <person name="Bingen E."/>
            <person name="Bonacorsi S."/>
            <person name="Bouchier C."/>
            <person name="Bouvet O."/>
            <person name="Calteau A."/>
            <person name="Chiapello H."/>
            <person name="Clermont O."/>
            <person name="Cruveiller S."/>
            <person name="Danchin A."/>
            <person name="Diard M."/>
            <person name="Dossat C."/>
            <person name="Karoui M.E."/>
            <person name="Frapy E."/>
            <person name="Garry L."/>
            <person name="Ghigo J.M."/>
            <person name="Gilles A.M."/>
            <person name="Johnson J."/>
            <person name="Le Bouguenec C."/>
            <person name="Lescat M."/>
            <person name="Mangenot S."/>
            <person name="Martinez-Jehanne V."/>
            <person name="Matic I."/>
            <person name="Nassif X."/>
            <person name="Oztas S."/>
            <person name="Petit M.A."/>
            <person name="Pichon C."/>
            <person name="Rouy Z."/>
            <person name="Ruf C.S."/>
            <person name="Schneider D."/>
            <person name="Tourret J."/>
            <person name="Vacherie B."/>
            <person name="Vallenet D."/>
            <person name="Medigue C."/>
            <person name="Rocha E.P.C."/>
            <person name="Denamur E."/>
        </authorList>
    </citation>
    <scope>NUCLEOTIDE SEQUENCE [LARGE SCALE GENOMIC DNA]</scope>
    <source>
        <strain>ATCC 35469 / DSM 13698 / BCRC 15582 / CCUG 18766 / IAM 14443 / JCM 21226 / LMG 7866 / NBRC 102419 / NCTC 12128 / CDC 0568-73</strain>
    </source>
</reference>
<accession>B7LW87</accession>
<protein>
    <recommendedName>
        <fullName evidence="1">Hydroxyacylglutathione hydrolase</fullName>
        <ecNumber evidence="1">3.1.2.6</ecNumber>
    </recommendedName>
    <alternativeName>
        <fullName evidence="1">Glyoxalase II</fullName>
        <shortName evidence="1">Glx II</shortName>
    </alternativeName>
</protein>
<evidence type="ECO:0000255" key="1">
    <source>
        <dbReference type="HAMAP-Rule" id="MF_01374"/>
    </source>
</evidence>